<keyword id="KW-0030">Aminoacyl-tRNA synthetase</keyword>
<keyword id="KW-0067">ATP-binding</keyword>
<keyword id="KW-0963">Cytoplasm</keyword>
<keyword id="KW-0436">Ligase</keyword>
<keyword id="KW-0547">Nucleotide-binding</keyword>
<keyword id="KW-0648">Protein biosynthesis</keyword>
<keyword id="KW-1185">Reference proteome</keyword>
<feature type="chain" id="PRO_1000091352" description="Leucine--tRNA ligase">
    <location>
        <begin position="1"/>
        <end position="865"/>
    </location>
</feature>
<feature type="short sequence motif" description="'HIGH' region">
    <location>
        <begin position="41"/>
        <end position="51"/>
    </location>
</feature>
<feature type="short sequence motif" description="'KMSKS' region">
    <location>
        <begin position="614"/>
        <end position="618"/>
    </location>
</feature>
<feature type="binding site" evidence="1">
    <location>
        <position position="617"/>
    </location>
    <ligand>
        <name>ATP</name>
        <dbReference type="ChEBI" id="CHEBI:30616"/>
    </ligand>
</feature>
<sequence length="865" mass="95609">MSRYNVRETEAKWQAAWADAGSFAVTADPAKPKYYVLEMFPYPSGRIHMGHVRNYTMGDVVARFKRAKGFNVLHPMGWDAFGLPAENAALEKGVHPGKWTYENIATMRGQLQTMGLAIDWSREVATCRPEYYRHEQKIFLDFLKAGLAYRKESWVNWDPVDNTVLANEQVVDGRGWRTGALVEKRKLSQWFLKITHFADDLLEALKGLERWPDKVRTMQENWIGRSTGCRFFFRMSDGHPDLEVFTTRPDTLYGASFVAISPNHPLAATLAAGNPALADFIAECNRTSTSEADIETAEKKGFATGVTAEHPFVPGWTLPVYVANFVLMEYGTGAIFGCPAHDQRDLDFARKYGLPVKPVVIPEGQDPAAFAVADEAYTGPGVLRNSDFLDGLGVEEAKAAAIRRIEEAGRGQGTTMYRLRDWGVSRQRYWGCPIPVIHCPKCGAVPVPEAQLPVTLPDDVTFDAPGNPLARHPTWKHVACPCCGGAAERETDTFDTFIESSWYFLRFADPRNGTLAFDPELVKYWLPVDQYIGGVEHAVLHLLYARFWTRALAHCGYLDLAEPFAGLFTQGMVTHATYQGTDGKWLFPAEVEFREGAMVKSDDGTAVTVGPIIKMSKSKKNVVDPQQIIESYGADAARLFMMSDSPPDRDLEWTTAGIDGAWRYINRLWRLVTEPGFDLPAPGTPAPASFGEEATAIRRLAHKAAQQIGEDIEGFRFNSSVARLRSFSNGVQDAFAKLAAKAAAGTAPAADEAWAAREALEMLARMVEPMMPHLAHEMWVELGHAGLLLDRPWPAVDAALVVEDTVTVAVQVNGKLRATINLRRDAGNEEAQAAALADPAVQKAVEGKPLRKVVVVPNRIVNVVV</sequence>
<gene>
    <name evidence="1" type="primary">leuS</name>
    <name type="ordered locus">RC1_2551</name>
</gene>
<dbReference type="EC" id="6.1.1.4" evidence="1"/>
<dbReference type="EMBL" id="CP000613">
    <property type="protein sequence ID" value="ACI99931.1"/>
    <property type="molecule type" value="Genomic_DNA"/>
</dbReference>
<dbReference type="RefSeq" id="WP_012567713.1">
    <property type="nucleotide sequence ID" value="NC_011420.2"/>
</dbReference>
<dbReference type="SMR" id="B6IU54"/>
<dbReference type="STRING" id="414684.RC1_2551"/>
<dbReference type="KEGG" id="rce:RC1_2551"/>
<dbReference type="eggNOG" id="COG0495">
    <property type="taxonomic scope" value="Bacteria"/>
</dbReference>
<dbReference type="HOGENOM" id="CLU_004427_0_0_5"/>
<dbReference type="OrthoDB" id="9810365at2"/>
<dbReference type="Proteomes" id="UP000001591">
    <property type="component" value="Chromosome"/>
</dbReference>
<dbReference type="GO" id="GO:0005829">
    <property type="term" value="C:cytosol"/>
    <property type="evidence" value="ECO:0007669"/>
    <property type="project" value="TreeGrafter"/>
</dbReference>
<dbReference type="GO" id="GO:0002161">
    <property type="term" value="F:aminoacyl-tRNA deacylase activity"/>
    <property type="evidence" value="ECO:0007669"/>
    <property type="project" value="InterPro"/>
</dbReference>
<dbReference type="GO" id="GO:0005524">
    <property type="term" value="F:ATP binding"/>
    <property type="evidence" value="ECO:0007669"/>
    <property type="project" value="UniProtKB-UniRule"/>
</dbReference>
<dbReference type="GO" id="GO:0004823">
    <property type="term" value="F:leucine-tRNA ligase activity"/>
    <property type="evidence" value="ECO:0007669"/>
    <property type="project" value="UniProtKB-UniRule"/>
</dbReference>
<dbReference type="GO" id="GO:0006429">
    <property type="term" value="P:leucyl-tRNA aminoacylation"/>
    <property type="evidence" value="ECO:0007669"/>
    <property type="project" value="UniProtKB-UniRule"/>
</dbReference>
<dbReference type="CDD" id="cd07958">
    <property type="entry name" value="Anticodon_Ia_Leu_BEm"/>
    <property type="match status" value="1"/>
</dbReference>
<dbReference type="CDD" id="cd00812">
    <property type="entry name" value="LeuRS_core"/>
    <property type="match status" value="1"/>
</dbReference>
<dbReference type="FunFam" id="1.10.730.10:FF:000002">
    <property type="entry name" value="Leucine--tRNA ligase"/>
    <property type="match status" value="1"/>
</dbReference>
<dbReference type="FunFam" id="3.40.50.620:FF:000003">
    <property type="entry name" value="Leucine--tRNA ligase"/>
    <property type="match status" value="1"/>
</dbReference>
<dbReference type="FunFam" id="3.40.50.620:FF:000056">
    <property type="entry name" value="Leucine--tRNA ligase"/>
    <property type="match status" value="1"/>
</dbReference>
<dbReference type="Gene3D" id="2.20.28.290">
    <property type="match status" value="1"/>
</dbReference>
<dbReference type="Gene3D" id="3.10.20.590">
    <property type="match status" value="1"/>
</dbReference>
<dbReference type="Gene3D" id="3.40.50.620">
    <property type="entry name" value="HUPs"/>
    <property type="match status" value="2"/>
</dbReference>
<dbReference type="Gene3D" id="1.10.730.10">
    <property type="entry name" value="Isoleucyl-tRNA Synthetase, Domain 1"/>
    <property type="match status" value="1"/>
</dbReference>
<dbReference type="HAMAP" id="MF_00049_B">
    <property type="entry name" value="Leu_tRNA_synth_B"/>
    <property type="match status" value="1"/>
</dbReference>
<dbReference type="InterPro" id="IPR001412">
    <property type="entry name" value="aa-tRNA-synth_I_CS"/>
</dbReference>
<dbReference type="InterPro" id="IPR002300">
    <property type="entry name" value="aa-tRNA-synth_Ia"/>
</dbReference>
<dbReference type="InterPro" id="IPR002302">
    <property type="entry name" value="Leu-tRNA-ligase"/>
</dbReference>
<dbReference type="InterPro" id="IPR025709">
    <property type="entry name" value="Leu_tRNA-synth_edit"/>
</dbReference>
<dbReference type="InterPro" id="IPR013155">
    <property type="entry name" value="M/V/L/I-tRNA-synth_anticd-bd"/>
</dbReference>
<dbReference type="InterPro" id="IPR015413">
    <property type="entry name" value="Methionyl/Leucyl_tRNA_Synth"/>
</dbReference>
<dbReference type="InterPro" id="IPR014729">
    <property type="entry name" value="Rossmann-like_a/b/a_fold"/>
</dbReference>
<dbReference type="InterPro" id="IPR009080">
    <property type="entry name" value="tRNAsynth_Ia_anticodon-bd"/>
</dbReference>
<dbReference type="InterPro" id="IPR009008">
    <property type="entry name" value="Val/Leu/Ile-tRNA-synth_edit"/>
</dbReference>
<dbReference type="NCBIfam" id="TIGR00396">
    <property type="entry name" value="leuS_bact"/>
    <property type="match status" value="1"/>
</dbReference>
<dbReference type="PANTHER" id="PTHR43740:SF2">
    <property type="entry name" value="LEUCINE--TRNA LIGASE, MITOCHONDRIAL"/>
    <property type="match status" value="1"/>
</dbReference>
<dbReference type="PANTHER" id="PTHR43740">
    <property type="entry name" value="LEUCYL-TRNA SYNTHETASE"/>
    <property type="match status" value="1"/>
</dbReference>
<dbReference type="Pfam" id="PF08264">
    <property type="entry name" value="Anticodon_1"/>
    <property type="match status" value="1"/>
</dbReference>
<dbReference type="Pfam" id="PF00133">
    <property type="entry name" value="tRNA-synt_1"/>
    <property type="match status" value="2"/>
</dbReference>
<dbReference type="Pfam" id="PF13603">
    <property type="entry name" value="tRNA-synt_1_2"/>
    <property type="match status" value="1"/>
</dbReference>
<dbReference type="Pfam" id="PF09334">
    <property type="entry name" value="tRNA-synt_1g"/>
    <property type="match status" value="1"/>
</dbReference>
<dbReference type="PRINTS" id="PR00985">
    <property type="entry name" value="TRNASYNTHLEU"/>
</dbReference>
<dbReference type="SUPFAM" id="SSF47323">
    <property type="entry name" value="Anticodon-binding domain of a subclass of class I aminoacyl-tRNA synthetases"/>
    <property type="match status" value="1"/>
</dbReference>
<dbReference type="SUPFAM" id="SSF52374">
    <property type="entry name" value="Nucleotidylyl transferase"/>
    <property type="match status" value="1"/>
</dbReference>
<dbReference type="SUPFAM" id="SSF50677">
    <property type="entry name" value="ValRS/IleRS/LeuRS editing domain"/>
    <property type="match status" value="1"/>
</dbReference>
<dbReference type="PROSITE" id="PS00178">
    <property type="entry name" value="AA_TRNA_LIGASE_I"/>
    <property type="match status" value="1"/>
</dbReference>
<accession>B6IU54</accession>
<name>SYL_RHOCS</name>
<organism>
    <name type="scientific">Rhodospirillum centenum (strain ATCC 51521 / SW)</name>
    <dbReference type="NCBI Taxonomy" id="414684"/>
    <lineage>
        <taxon>Bacteria</taxon>
        <taxon>Pseudomonadati</taxon>
        <taxon>Pseudomonadota</taxon>
        <taxon>Alphaproteobacteria</taxon>
        <taxon>Rhodospirillales</taxon>
        <taxon>Rhodospirillaceae</taxon>
        <taxon>Rhodospirillum</taxon>
    </lineage>
</organism>
<protein>
    <recommendedName>
        <fullName evidence="1">Leucine--tRNA ligase</fullName>
        <ecNumber evidence="1">6.1.1.4</ecNumber>
    </recommendedName>
    <alternativeName>
        <fullName evidence="1">Leucyl-tRNA synthetase</fullName>
        <shortName evidence="1">LeuRS</shortName>
    </alternativeName>
</protein>
<reference key="1">
    <citation type="submission" date="2007-03" db="EMBL/GenBank/DDBJ databases">
        <title>Genome sequence of Rhodospirillum centenum.</title>
        <authorList>
            <person name="Touchman J.W."/>
            <person name="Bauer C."/>
            <person name="Blankenship R.E."/>
        </authorList>
    </citation>
    <scope>NUCLEOTIDE SEQUENCE [LARGE SCALE GENOMIC DNA]</scope>
    <source>
        <strain>ATCC 51521 / SW</strain>
    </source>
</reference>
<proteinExistence type="inferred from homology"/>
<comment type="catalytic activity">
    <reaction evidence="1">
        <text>tRNA(Leu) + L-leucine + ATP = L-leucyl-tRNA(Leu) + AMP + diphosphate</text>
        <dbReference type="Rhea" id="RHEA:11688"/>
        <dbReference type="Rhea" id="RHEA-COMP:9613"/>
        <dbReference type="Rhea" id="RHEA-COMP:9622"/>
        <dbReference type="ChEBI" id="CHEBI:30616"/>
        <dbReference type="ChEBI" id="CHEBI:33019"/>
        <dbReference type="ChEBI" id="CHEBI:57427"/>
        <dbReference type="ChEBI" id="CHEBI:78442"/>
        <dbReference type="ChEBI" id="CHEBI:78494"/>
        <dbReference type="ChEBI" id="CHEBI:456215"/>
        <dbReference type="EC" id="6.1.1.4"/>
    </reaction>
</comment>
<comment type="subcellular location">
    <subcellularLocation>
        <location evidence="1">Cytoplasm</location>
    </subcellularLocation>
</comment>
<comment type="similarity">
    <text evidence="1">Belongs to the class-I aminoacyl-tRNA synthetase family.</text>
</comment>
<evidence type="ECO:0000255" key="1">
    <source>
        <dbReference type="HAMAP-Rule" id="MF_00049"/>
    </source>
</evidence>